<proteinExistence type="inferred from homology"/>
<gene>
    <name evidence="1" type="primary">ctaA</name>
    <name type="ordered locus">NGR_c10180</name>
</gene>
<dbReference type="EC" id="1.17.99.9" evidence="1"/>
<dbReference type="EMBL" id="CP001389">
    <property type="protein sequence ID" value="ACP24807.1"/>
    <property type="molecule type" value="Genomic_DNA"/>
</dbReference>
<dbReference type="RefSeq" id="WP_012707591.1">
    <property type="nucleotide sequence ID" value="NC_012587.1"/>
</dbReference>
<dbReference type="RefSeq" id="YP_002825560.1">
    <property type="nucleotide sequence ID" value="NC_012587.1"/>
</dbReference>
<dbReference type="SMR" id="C3MA28"/>
<dbReference type="STRING" id="394.NGR_c10180"/>
<dbReference type="KEGG" id="rhi:NGR_c10180"/>
<dbReference type="PATRIC" id="fig|394.7.peg.3839"/>
<dbReference type="eggNOG" id="COG1612">
    <property type="taxonomic scope" value="Bacteria"/>
</dbReference>
<dbReference type="HOGENOM" id="CLU_017627_0_0_5"/>
<dbReference type="OrthoDB" id="9793156at2"/>
<dbReference type="UniPathway" id="UPA00269">
    <property type="reaction ID" value="UER00713"/>
</dbReference>
<dbReference type="Proteomes" id="UP000001054">
    <property type="component" value="Chromosome"/>
</dbReference>
<dbReference type="GO" id="GO:0005886">
    <property type="term" value="C:plasma membrane"/>
    <property type="evidence" value="ECO:0007669"/>
    <property type="project" value="UniProtKB-SubCell"/>
</dbReference>
<dbReference type="GO" id="GO:0046872">
    <property type="term" value="F:metal ion binding"/>
    <property type="evidence" value="ECO:0007669"/>
    <property type="project" value="UniProtKB-KW"/>
</dbReference>
<dbReference type="GO" id="GO:0016653">
    <property type="term" value="F:oxidoreductase activity, acting on NAD(P)H, heme protein as acceptor"/>
    <property type="evidence" value="ECO:0007669"/>
    <property type="project" value="InterPro"/>
</dbReference>
<dbReference type="GO" id="GO:0006784">
    <property type="term" value="P:heme A biosynthetic process"/>
    <property type="evidence" value="ECO:0007669"/>
    <property type="project" value="UniProtKB-UniRule"/>
</dbReference>
<dbReference type="HAMAP" id="MF_01665">
    <property type="entry name" value="HemeA_synth_type2"/>
    <property type="match status" value="1"/>
</dbReference>
<dbReference type="InterPro" id="IPR003780">
    <property type="entry name" value="COX15/CtaA_fam"/>
</dbReference>
<dbReference type="InterPro" id="IPR023754">
    <property type="entry name" value="HemeA_Synthase_type2"/>
</dbReference>
<dbReference type="PANTHER" id="PTHR23289">
    <property type="entry name" value="CYTOCHROME C OXIDASE ASSEMBLY PROTEIN COX15"/>
    <property type="match status" value="1"/>
</dbReference>
<dbReference type="PANTHER" id="PTHR23289:SF2">
    <property type="entry name" value="CYTOCHROME C OXIDASE ASSEMBLY PROTEIN COX15 HOMOLOG"/>
    <property type="match status" value="1"/>
</dbReference>
<dbReference type="Pfam" id="PF02628">
    <property type="entry name" value="COX15-CtaA"/>
    <property type="match status" value="1"/>
</dbReference>
<comment type="function">
    <text evidence="1">Catalyzes the conversion of heme O to heme A by two successive hydroxylations of the methyl group at C8. The first hydroxylation forms heme I, the second hydroxylation results in an unstable dihydroxymethyl group, which spontaneously dehydrates, resulting in the formyl group of heme A.</text>
</comment>
<comment type="catalytic activity">
    <reaction evidence="1">
        <text>Fe(II)-heme o + 2 A + H2O = Fe(II)-heme a + 2 AH2</text>
        <dbReference type="Rhea" id="RHEA:63388"/>
        <dbReference type="ChEBI" id="CHEBI:13193"/>
        <dbReference type="ChEBI" id="CHEBI:15377"/>
        <dbReference type="ChEBI" id="CHEBI:17499"/>
        <dbReference type="ChEBI" id="CHEBI:60530"/>
        <dbReference type="ChEBI" id="CHEBI:61715"/>
        <dbReference type="EC" id="1.17.99.9"/>
    </reaction>
    <physiologicalReaction direction="left-to-right" evidence="1">
        <dbReference type="Rhea" id="RHEA:63389"/>
    </physiologicalReaction>
</comment>
<comment type="cofactor">
    <cofactor evidence="1">
        <name>heme b</name>
        <dbReference type="ChEBI" id="CHEBI:60344"/>
    </cofactor>
</comment>
<comment type="pathway">
    <text evidence="1">Porphyrin-containing compound metabolism; heme A biosynthesis; heme A from heme O: step 1/1.</text>
</comment>
<comment type="subunit">
    <text evidence="1">Interacts with CtaB.</text>
</comment>
<comment type="subcellular location">
    <subcellularLocation>
        <location evidence="1">Cell membrane</location>
        <topology evidence="1">Multi-pass membrane protein</topology>
    </subcellularLocation>
</comment>
<comment type="similarity">
    <text evidence="1">Belongs to the COX15/CtaA family. Type 2 subfamily.</text>
</comment>
<feature type="chain" id="PRO_1000187256" description="Heme A synthase">
    <location>
        <begin position="1"/>
        <end position="367"/>
    </location>
</feature>
<feature type="transmembrane region" description="Helical" evidence="1">
    <location>
        <begin position="26"/>
        <end position="46"/>
    </location>
</feature>
<feature type="transmembrane region" description="Helical" evidence="1">
    <location>
        <begin position="111"/>
        <end position="131"/>
    </location>
</feature>
<feature type="transmembrane region" description="Helical" evidence="1">
    <location>
        <begin position="139"/>
        <end position="159"/>
    </location>
</feature>
<feature type="transmembrane region" description="Helical" evidence="1">
    <location>
        <begin position="174"/>
        <end position="194"/>
    </location>
</feature>
<feature type="transmembrane region" description="Helical" evidence="1">
    <location>
        <begin position="212"/>
        <end position="232"/>
    </location>
</feature>
<feature type="transmembrane region" description="Helical" evidence="1">
    <location>
        <begin position="276"/>
        <end position="296"/>
    </location>
</feature>
<feature type="transmembrane region" description="Helical" evidence="1">
    <location>
        <begin position="305"/>
        <end position="325"/>
    </location>
</feature>
<feature type="transmembrane region" description="Helical" evidence="1">
    <location>
        <begin position="327"/>
        <end position="347"/>
    </location>
</feature>
<feature type="binding site" description="axial binding residue" evidence="1">
    <location>
        <position position="274"/>
    </location>
    <ligand>
        <name>heme</name>
        <dbReference type="ChEBI" id="CHEBI:30413"/>
    </ligand>
    <ligandPart>
        <name>Fe</name>
        <dbReference type="ChEBI" id="CHEBI:18248"/>
    </ligandPart>
</feature>
<feature type="binding site" description="axial binding residue" evidence="1">
    <location>
        <position position="335"/>
    </location>
    <ligand>
        <name>heme</name>
        <dbReference type="ChEBI" id="CHEBI:30413"/>
    </ligand>
    <ligandPart>
        <name>Fe</name>
        <dbReference type="ChEBI" id="CHEBI:18248"/>
    </ligandPart>
</feature>
<evidence type="ECO:0000255" key="1">
    <source>
        <dbReference type="HAMAP-Rule" id="MF_01665"/>
    </source>
</evidence>
<protein>
    <recommendedName>
        <fullName evidence="1">Heme A synthase</fullName>
        <shortName evidence="1">HAS</shortName>
        <ecNumber evidence="1">1.17.99.9</ecNumber>
    </recommendedName>
    <alternativeName>
        <fullName evidence="1">Cytochrome aa3-controlling protein</fullName>
    </alternativeName>
</protein>
<reference key="1">
    <citation type="journal article" date="2009" name="Appl. Environ. Microbiol.">
        <title>Rhizobium sp. strain NGR234 possesses a remarkable number of secretion systems.</title>
        <authorList>
            <person name="Schmeisser C."/>
            <person name="Liesegang H."/>
            <person name="Krysciak D."/>
            <person name="Bakkou N."/>
            <person name="Le Quere A."/>
            <person name="Wollherr A."/>
            <person name="Heinemeyer I."/>
            <person name="Morgenstern B."/>
            <person name="Pommerening-Roeser A."/>
            <person name="Flores M."/>
            <person name="Palacios R."/>
            <person name="Brenner S."/>
            <person name="Gottschalk G."/>
            <person name="Schmitz R.A."/>
            <person name="Broughton W.J."/>
            <person name="Perret X."/>
            <person name="Strittmatter A.W."/>
            <person name="Streit W.R."/>
        </authorList>
    </citation>
    <scope>NUCLEOTIDE SEQUENCE [LARGE SCALE GENOMIC DNA]</scope>
    <source>
        <strain>NBRC 101917 / NGR234</strain>
    </source>
</reference>
<accession>C3MA28</accession>
<keyword id="KW-1003">Cell membrane</keyword>
<keyword id="KW-0350">Heme biosynthesis</keyword>
<keyword id="KW-0408">Iron</keyword>
<keyword id="KW-0472">Membrane</keyword>
<keyword id="KW-0479">Metal-binding</keyword>
<keyword id="KW-0560">Oxidoreductase</keyword>
<keyword id="KW-1185">Reference proteome</keyword>
<keyword id="KW-0812">Transmembrane</keyword>
<keyword id="KW-1133">Transmembrane helix</keyword>
<organism>
    <name type="scientific">Sinorhizobium fredii (strain NBRC 101917 / NGR234)</name>
    <dbReference type="NCBI Taxonomy" id="394"/>
    <lineage>
        <taxon>Bacteria</taxon>
        <taxon>Pseudomonadati</taxon>
        <taxon>Pseudomonadota</taxon>
        <taxon>Alphaproteobacteria</taxon>
        <taxon>Hyphomicrobiales</taxon>
        <taxon>Rhizobiaceae</taxon>
        <taxon>Sinorhizobium/Ensifer group</taxon>
        <taxon>Sinorhizobium</taxon>
    </lineage>
</organism>
<name>CTAA_SINFN</name>
<sequence>MAHADLATEQSLRSEIDRTDHNRRQIRGWLAVVLFALFALVIVGGATRLTESGLSITEWKPIHGVIPPLSAEEWEEEFRLYQRIPQYEQMNKGMTVEAFKTIFWWEWAHRLLARSIGVIFALPLLFFWLTGRVERRLRLPLLGILALGGFQGFIGWWMVSSGLVERTEVSQYRLATHLVIACLIFAACMWIYRGLSPHTGDAAPTQRSQTMAGIIAAMSLFQIYLGALVAGLDAGLSYNTWPLMDGAIVPGDLFVQQPAWINLFENPKTVQFLHRAGAYLLFALAFAHMVVSLRAASGTTHARRSVLLFVLLTVQAAIGITTLLLQVPIVWGVLHQAGALVVLGFAIAHWRGFVGEYPRPAAIEVRH</sequence>